<keyword id="KW-0050">Antiport</keyword>
<keyword id="KW-0997">Cell inner membrane</keyword>
<keyword id="KW-1003">Cell membrane</keyword>
<keyword id="KW-0406">Ion transport</keyword>
<keyword id="KW-0472">Membrane</keyword>
<keyword id="KW-0915">Sodium</keyword>
<keyword id="KW-0739">Sodium transport</keyword>
<keyword id="KW-0812">Transmembrane</keyword>
<keyword id="KW-1133">Transmembrane helix</keyword>
<keyword id="KW-0813">Transport</keyword>
<evidence type="ECO:0000255" key="1">
    <source>
        <dbReference type="HAMAP-Rule" id="MF_01599"/>
    </source>
</evidence>
<organism>
    <name type="scientific">Pseudomonas aeruginosa (strain LESB58)</name>
    <dbReference type="NCBI Taxonomy" id="557722"/>
    <lineage>
        <taxon>Bacteria</taxon>
        <taxon>Pseudomonadati</taxon>
        <taxon>Pseudomonadota</taxon>
        <taxon>Gammaproteobacteria</taxon>
        <taxon>Pseudomonadales</taxon>
        <taxon>Pseudomonadaceae</taxon>
        <taxon>Pseudomonas</taxon>
    </lineage>
</organism>
<proteinExistence type="inferred from homology"/>
<sequence>MSSPLSQAFAQNFLGHSPRWYKLTVLAFLLLNPLLLWLAGPVTSAWVLVGEFIFTLAMALKCYPLQPGGLLVLEALLLGLATPEALYAELQHNFPVLLLLMFMVAGIYFMKDLLLLLFSRLLLGVRSKTLLSLLFCLLAALLSAFLDALTVTAVVISVAVAFFAVYHRVASGQRASEDYDPATDRQVPELHRAHLEEFRAFLRSLLMHAAVGTALGGVCTLVGEPQNLLIGHEAGWHFVEFFRQVAPVSMPVLAAGLLTCVLLEKSRRFGYGAQLPAAVRQVLAEYAASESRKRGAQQKAALLVQALAALVLIVGLALHVAEVGLIGLLVIVLITAFTGVTDEHQIGRAFQEALPFTALLVVFFAVVAVIHQQHLFTPIIQAVLALPAERQPGMLFIANGLLSAISDNVFVATIYITEVKQALDAGHMSREHFDTLAVAINTGTNLPSVATPNGQAAFLFLLTSSIAPLVRLSYGRMVWMALPYTLVMGGLGWWAVSHWL</sequence>
<reference key="1">
    <citation type="journal article" date="2009" name="Genome Res.">
        <title>Newly introduced genomic prophage islands are critical determinants of in vivo competitiveness in the Liverpool epidemic strain of Pseudomonas aeruginosa.</title>
        <authorList>
            <person name="Winstanley C."/>
            <person name="Langille M.G.I."/>
            <person name="Fothergill J.L."/>
            <person name="Kukavica-Ibrulj I."/>
            <person name="Paradis-Bleau C."/>
            <person name="Sanschagrin F."/>
            <person name="Thomson N.R."/>
            <person name="Winsor G.L."/>
            <person name="Quail M.A."/>
            <person name="Lennard N."/>
            <person name="Bignell A."/>
            <person name="Clarke L."/>
            <person name="Seeger K."/>
            <person name="Saunders D."/>
            <person name="Harris D."/>
            <person name="Parkhill J."/>
            <person name="Hancock R.E.W."/>
            <person name="Brinkman F.S.L."/>
            <person name="Levesque R.C."/>
        </authorList>
    </citation>
    <scope>NUCLEOTIDE SEQUENCE [LARGE SCALE GENOMIC DNA]</scope>
    <source>
        <strain>LESB58</strain>
    </source>
</reference>
<feature type="chain" id="PRO_1000148043" description="Na(+)/H(+) antiporter NhaB">
    <location>
        <begin position="1"/>
        <end position="500"/>
    </location>
</feature>
<feature type="transmembrane region" description="Helical" evidence="1">
    <location>
        <begin position="28"/>
        <end position="50"/>
    </location>
</feature>
<feature type="transmembrane region" description="Helical" evidence="1">
    <location>
        <begin position="68"/>
        <end position="88"/>
    </location>
</feature>
<feature type="transmembrane region" description="Helical" evidence="1">
    <location>
        <begin position="98"/>
        <end position="118"/>
    </location>
</feature>
<feature type="transmembrane region" description="Helical" evidence="1">
    <location>
        <begin position="121"/>
        <end position="141"/>
    </location>
</feature>
<feature type="transmembrane region" description="Helical" evidence="1">
    <location>
        <begin position="145"/>
        <end position="165"/>
    </location>
</feature>
<feature type="transmembrane region" description="Helical" evidence="1">
    <location>
        <begin position="205"/>
        <end position="225"/>
    </location>
</feature>
<feature type="transmembrane region" description="Helical" evidence="1">
    <location>
        <begin position="244"/>
        <end position="264"/>
    </location>
</feature>
<feature type="transmembrane region" description="Helical" evidence="1">
    <location>
        <begin position="311"/>
        <end position="331"/>
    </location>
</feature>
<feature type="transmembrane region" description="Helical" evidence="1">
    <location>
        <begin position="350"/>
        <end position="370"/>
    </location>
</feature>
<feature type="transmembrane region" description="Helical" evidence="1">
    <location>
        <begin position="394"/>
        <end position="414"/>
    </location>
</feature>
<feature type="transmembrane region" description="Helical" evidence="1">
    <location>
        <begin position="449"/>
        <end position="469"/>
    </location>
</feature>
<feature type="transmembrane region" description="Helical" evidence="1">
    <location>
        <begin position="477"/>
        <end position="497"/>
    </location>
</feature>
<gene>
    <name evidence="1" type="primary">nhaB</name>
    <name type="ordered locus">PLES_35071</name>
</gene>
<dbReference type="EMBL" id="FM209186">
    <property type="protein sequence ID" value="CAW28234.1"/>
    <property type="molecule type" value="Genomic_DNA"/>
</dbReference>
<dbReference type="RefSeq" id="WP_003113594.1">
    <property type="nucleotide sequence ID" value="NC_011770.1"/>
</dbReference>
<dbReference type="SMR" id="B7VB57"/>
<dbReference type="KEGG" id="pag:PLES_35071"/>
<dbReference type="HOGENOM" id="CLU_041110_0_0_6"/>
<dbReference type="GO" id="GO:0005886">
    <property type="term" value="C:plasma membrane"/>
    <property type="evidence" value="ECO:0007669"/>
    <property type="project" value="UniProtKB-SubCell"/>
</dbReference>
<dbReference type="GO" id="GO:0015385">
    <property type="term" value="F:sodium:proton antiporter activity"/>
    <property type="evidence" value="ECO:0007669"/>
    <property type="project" value="InterPro"/>
</dbReference>
<dbReference type="HAMAP" id="MF_01599">
    <property type="entry name" value="NhaB"/>
    <property type="match status" value="1"/>
</dbReference>
<dbReference type="InterPro" id="IPR004671">
    <property type="entry name" value="Na+/H+_antiporter_NhaB"/>
</dbReference>
<dbReference type="NCBIfam" id="NF007093">
    <property type="entry name" value="PRK09547.1"/>
    <property type="match status" value="1"/>
</dbReference>
<dbReference type="PANTHER" id="PTHR43302:SF1">
    <property type="entry name" value="NA(+)_H(+) ANTIPORTER NHAB"/>
    <property type="match status" value="1"/>
</dbReference>
<dbReference type="PANTHER" id="PTHR43302">
    <property type="entry name" value="TRANSPORTER ARSB-RELATED"/>
    <property type="match status" value="1"/>
</dbReference>
<dbReference type="Pfam" id="PF06450">
    <property type="entry name" value="NhaB"/>
    <property type="match status" value="1"/>
</dbReference>
<protein>
    <recommendedName>
        <fullName evidence="1">Na(+)/H(+) antiporter NhaB</fullName>
    </recommendedName>
    <alternativeName>
        <fullName evidence="1">Sodium/proton antiporter NhaB</fullName>
    </alternativeName>
</protein>
<accession>B7VB57</accession>
<comment type="function">
    <text evidence="1">Na(+)/H(+) antiporter that extrudes sodium in exchange for external protons.</text>
</comment>
<comment type="catalytic activity">
    <reaction evidence="1">
        <text>2 Na(+)(in) + 3 H(+)(out) = 2 Na(+)(out) + 3 H(+)(in)</text>
        <dbReference type="Rhea" id="RHEA:29247"/>
        <dbReference type="ChEBI" id="CHEBI:15378"/>
        <dbReference type="ChEBI" id="CHEBI:29101"/>
    </reaction>
    <physiologicalReaction direction="left-to-right" evidence="1">
        <dbReference type="Rhea" id="RHEA:29248"/>
    </physiologicalReaction>
</comment>
<comment type="subcellular location">
    <subcellularLocation>
        <location evidence="1">Cell inner membrane</location>
        <topology evidence="1">Multi-pass membrane protein</topology>
    </subcellularLocation>
</comment>
<comment type="similarity">
    <text evidence="1">Belongs to the NhaB Na(+)/H(+) (TC 2.A.34) antiporter family.</text>
</comment>
<name>NHAB_PSEA8</name>